<comment type="function">
    <text evidence="1">Peptidoglycan polymerase that catalyzes glycan chain elongation from lipid-linked precursors.</text>
</comment>
<comment type="catalytic activity">
    <reaction evidence="1">
        <text>[GlcNAc-(1-&gt;4)-Mur2Ac(oyl-L-Ala-gamma-D-Glu-L-Lys-D-Ala-D-Ala)](n)-di-trans,octa-cis-undecaprenyl diphosphate + beta-D-GlcNAc-(1-&gt;4)-Mur2Ac(oyl-L-Ala-gamma-D-Glu-L-Lys-D-Ala-D-Ala)-di-trans,octa-cis-undecaprenyl diphosphate = [GlcNAc-(1-&gt;4)-Mur2Ac(oyl-L-Ala-gamma-D-Glu-L-Lys-D-Ala-D-Ala)](n+1)-di-trans,octa-cis-undecaprenyl diphosphate + di-trans,octa-cis-undecaprenyl diphosphate + H(+)</text>
        <dbReference type="Rhea" id="RHEA:23708"/>
        <dbReference type="Rhea" id="RHEA-COMP:9602"/>
        <dbReference type="Rhea" id="RHEA-COMP:9603"/>
        <dbReference type="ChEBI" id="CHEBI:15378"/>
        <dbReference type="ChEBI" id="CHEBI:58405"/>
        <dbReference type="ChEBI" id="CHEBI:60033"/>
        <dbReference type="ChEBI" id="CHEBI:78435"/>
        <dbReference type="EC" id="2.4.99.28"/>
    </reaction>
</comment>
<comment type="pathway">
    <text evidence="1">Cell wall biogenesis; peptidoglycan biosynthesis.</text>
</comment>
<comment type="subcellular location">
    <subcellularLocation>
        <location evidence="1">Cell inner membrane</location>
        <topology evidence="1">Single-pass membrane protein</topology>
    </subcellularLocation>
</comment>
<comment type="similarity">
    <text evidence="1">Belongs to the glycosyltransferase 51 family.</text>
</comment>
<evidence type="ECO:0000255" key="1">
    <source>
        <dbReference type="HAMAP-Rule" id="MF_00766"/>
    </source>
</evidence>
<sequence>MFRIVKWLIALPVGIFIFFNAYVYGNIITYRAVAPHRTAFMSMRMKQFEQEGRDVALDYRWVPYNRISTNLKKALIASEDVRFAGHGGFDWGGIQNAIRRNRNSGEVKAGGSTISQQLAKNLFLNESRNYLRKGEEAAITAMMEAVTDKNRIFELYLNSIEWHYGVFGAEAASRYFYKKPAADLTKQQAAKLTALVPAPLYYADHPKSKRLRNKTNIVLRRMGSAELPESDTD</sequence>
<reference key="1">
    <citation type="journal article" date="2008" name="J. Bacteriol.">
        <title>Complete genome sequence of Neisseria gonorrhoeae NCCP11945.</title>
        <authorList>
            <person name="Chung G.T."/>
            <person name="Yoo J.S."/>
            <person name="Oh H.B."/>
            <person name="Lee Y.S."/>
            <person name="Cha S.H."/>
            <person name="Kim S.J."/>
            <person name="Yoo C.K."/>
        </authorList>
    </citation>
    <scope>NUCLEOTIDE SEQUENCE [LARGE SCALE GENOMIC DNA]</scope>
    <source>
        <strain>NCCP11945</strain>
    </source>
</reference>
<keyword id="KW-0997">Cell inner membrane</keyword>
<keyword id="KW-1003">Cell membrane</keyword>
<keyword id="KW-0133">Cell shape</keyword>
<keyword id="KW-0961">Cell wall biogenesis/degradation</keyword>
<keyword id="KW-0328">Glycosyltransferase</keyword>
<keyword id="KW-0472">Membrane</keyword>
<keyword id="KW-0573">Peptidoglycan synthesis</keyword>
<keyword id="KW-0808">Transferase</keyword>
<keyword id="KW-0812">Transmembrane</keyword>
<keyword id="KW-1133">Transmembrane helix</keyword>
<accession>B4RJ59</accession>
<dbReference type="EC" id="2.4.99.28" evidence="1"/>
<dbReference type="EMBL" id="CP001050">
    <property type="protein sequence ID" value="ACF30543.1"/>
    <property type="molecule type" value="Genomic_DNA"/>
</dbReference>
<dbReference type="RefSeq" id="WP_003689538.1">
    <property type="nucleotide sequence ID" value="NC_011035.1"/>
</dbReference>
<dbReference type="SMR" id="B4RJ59"/>
<dbReference type="CAZy" id="GT51">
    <property type="family name" value="Glycosyltransferase Family 51"/>
</dbReference>
<dbReference type="KEGG" id="ngk:NGK_1906"/>
<dbReference type="HOGENOM" id="CLU_006354_1_0_4"/>
<dbReference type="UniPathway" id="UPA00219"/>
<dbReference type="Proteomes" id="UP000002564">
    <property type="component" value="Chromosome"/>
</dbReference>
<dbReference type="GO" id="GO:0009274">
    <property type="term" value="C:peptidoglycan-based cell wall"/>
    <property type="evidence" value="ECO:0007669"/>
    <property type="project" value="InterPro"/>
</dbReference>
<dbReference type="GO" id="GO:0005886">
    <property type="term" value="C:plasma membrane"/>
    <property type="evidence" value="ECO:0007669"/>
    <property type="project" value="UniProtKB-SubCell"/>
</dbReference>
<dbReference type="GO" id="GO:0016763">
    <property type="term" value="F:pentosyltransferase activity"/>
    <property type="evidence" value="ECO:0007669"/>
    <property type="project" value="InterPro"/>
</dbReference>
<dbReference type="GO" id="GO:0008955">
    <property type="term" value="F:peptidoglycan glycosyltransferase activity"/>
    <property type="evidence" value="ECO:0007669"/>
    <property type="project" value="UniProtKB-UniRule"/>
</dbReference>
<dbReference type="GO" id="GO:0071555">
    <property type="term" value="P:cell wall organization"/>
    <property type="evidence" value="ECO:0007669"/>
    <property type="project" value="UniProtKB-KW"/>
</dbReference>
<dbReference type="GO" id="GO:0009252">
    <property type="term" value="P:peptidoglycan biosynthetic process"/>
    <property type="evidence" value="ECO:0007669"/>
    <property type="project" value="UniProtKB-UniRule"/>
</dbReference>
<dbReference type="GO" id="GO:0008360">
    <property type="term" value="P:regulation of cell shape"/>
    <property type="evidence" value="ECO:0007669"/>
    <property type="project" value="UniProtKB-KW"/>
</dbReference>
<dbReference type="Gene3D" id="1.10.3810.10">
    <property type="entry name" value="Biosynthetic peptidoglycan transglycosylase-like"/>
    <property type="match status" value="1"/>
</dbReference>
<dbReference type="HAMAP" id="MF_00766">
    <property type="entry name" value="PGT_MtgA"/>
    <property type="match status" value="1"/>
</dbReference>
<dbReference type="InterPro" id="IPR001264">
    <property type="entry name" value="Glyco_trans_51"/>
</dbReference>
<dbReference type="InterPro" id="IPR023346">
    <property type="entry name" value="Lysozyme-like_dom_sf"/>
</dbReference>
<dbReference type="InterPro" id="IPR036950">
    <property type="entry name" value="PBP_transglycosylase"/>
</dbReference>
<dbReference type="InterPro" id="IPR011812">
    <property type="entry name" value="Pep_trsgly"/>
</dbReference>
<dbReference type="NCBIfam" id="TIGR02070">
    <property type="entry name" value="mono_pep_trsgly"/>
    <property type="match status" value="1"/>
</dbReference>
<dbReference type="PANTHER" id="PTHR30400:SF0">
    <property type="entry name" value="BIOSYNTHETIC PEPTIDOGLYCAN TRANSGLYCOSYLASE"/>
    <property type="match status" value="1"/>
</dbReference>
<dbReference type="PANTHER" id="PTHR30400">
    <property type="entry name" value="MONOFUNCTIONAL BIOSYNTHETIC PEPTIDOGLYCAN TRANSGLYCOSYLASE"/>
    <property type="match status" value="1"/>
</dbReference>
<dbReference type="Pfam" id="PF00912">
    <property type="entry name" value="Transgly"/>
    <property type="match status" value="1"/>
</dbReference>
<dbReference type="SUPFAM" id="SSF53955">
    <property type="entry name" value="Lysozyme-like"/>
    <property type="match status" value="1"/>
</dbReference>
<protein>
    <recommendedName>
        <fullName evidence="1">Biosynthetic peptidoglycan transglycosylase</fullName>
        <ecNumber evidence="1">2.4.99.28</ecNumber>
    </recommendedName>
    <alternativeName>
        <fullName evidence="1">Glycan polymerase</fullName>
    </alternativeName>
    <alternativeName>
        <fullName evidence="1">Peptidoglycan glycosyltransferase MtgA</fullName>
        <shortName evidence="1">PGT</shortName>
    </alternativeName>
</protein>
<organism>
    <name type="scientific">Neisseria gonorrhoeae (strain NCCP11945)</name>
    <dbReference type="NCBI Taxonomy" id="521006"/>
    <lineage>
        <taxon>Bacteria</taxon>
        <taxon>Pseudomonadati</taxon>
        <taxon>Pseudomonadota</taxon>
        <taxon>Betaproteobacteria</taxon>
        <taxon>Neisseriales</taxon>
        <taxon>Neisseriaceae</taxon>
        <taxon>Neisseria</taxon>
    </lineage>
</organism>
<feature type="chain" id="PRO_1000133598" description="Biosynthetic peptidoglycan transglycosylase">
    <location>
        <begin position="1"/>
        <end position="233"/>
    </location>
</feature>
<feature type="transmembrane region" description="Helical" evidence="1">
    <location>
        <begin position="8"/>
        <end position="28"/>
    </location>
</feature>
<proteinExistence type="inferred from homology"/>
<name>MTGA_NEIG2</name>
<gene>
    <name evidence="1" type="primary">mtgA</name>
    <name type="ordered locus">NGK_1906</name>
</gene>